<accession>Q0AD92</accession>
<protein>
    <recommendedName>
        <fullName evidence="1">CTP synthase</fullName>
        <ecNumber evidence="1">6.3.4.2</ecNumber>
    </recommendedName>
    <alternativeName>
        <fullName evidence="1">Cytidine 5'-triphosphate synthase</fullName>
    </alternativeName>
    <alternativeName>
        <fullName evidence="1">Cytidine triphosphate synthetase</fullName>
        <shortName evidence="1">CTP synthetase</shortName>
        <shortName evidence="1">CTPS</shortName>
    </alternativeName>
    <alternativeName>
        <fullName evidence="1">UTP--ammonia ligase</fullName>
    </alternativeName>
</protein>
<proteinExistence type="inferred from homology"/>
<sequence length="564" mass="63096">MTKFVFVTGGVVSSLGKGIAAASLAALLETRGIRVTILKLDPYINVDPGTMNPFQHGEVFVTDDGAETDLDLGHYERFISTKMTRRNNFTTGQIYESVIRKERRGDYLGGTVQVIPHITDEIKLFIRNGVSDAQVAIVEIGGTVGDIESLPFLEAIRQMSVQLPHHDTCFIHLTLLPYISSAGELKTKPTQHSVKELREIGIQPDVLLCRSDRPLPLDERRKIALFTNVREESVISAIDVDNIYKIPALLHEQMLDEIVCHRLGILAKPANLTTWKKLIHALEHPEHEVSIALVGKYVDLTESYKSLSEALIHAGIHTRCKINIHYIDSENIERHGTGCLANMDAILVPGGFGKRGVEGKIMAISHARNHQIPYLGICLGMQLAVIEFARNCLQLENAHSTEFNPDTPYPVLGLITEWRDRRGQIEKRSPQTDLGGTMRLGGQECLLKPHTLARKIYGTDKIIERHRHRYEVNAEFIPQLEQAGLQVSGLSAAENLCEMIELPQSRHPWFVACQFHPEFTSTPRNGHPLFNDYVRAAISFADKSGHAKLRDHNMQKNVATDSTH</sequence>
<keyword id="KW-0067">ATP-binding</keyword>
<keyword id="KW-0315">Glutamine amidotransferase</keyword>
<keyword id="KW-0436">Ligase</keyword>
<keyword id="KW-0460">Magnesium</keyword>
<keyword id="KW-0479">Metal-binding</keyword>
<keyword id="KW-0547">Nucleotide-binding</keyword>
<keyword id="KW-0665">Pyrimidine biosynthesis</keyword>
<reference key="1">
    <citation type="journal article" date="2007" name="Environ. Microbiol.">
        <title>Whole-genome analysis of the ammonia-oxidizing bacterium, Nitrosomonas eutropha C91: implications for niche adaptation.</title>
        <authorList>
            <person name="Stein L.Y."/>
            <person name="Arp D.J."/>
            <person name="Berube P.M."/>
            <person name="Chain P.S."/>
            <person name="Hauser L."/>
            <person name="Jetten M.S."/>
            <person name="Klotz M.G."/>
            <person name="Larimer F.W."/>
            <person name="Norton J.M."/>
            <person name="Op den Camp H.J.M."/>
            <person name="Shin M."/>
            <person name="Wei X."/>
        </authorList>
    </citation>
    <scope>NUCLEOTIDE SEQUENCE [LARGE SCALE GENOMIC DNA]</scope>
    <source>
        <strain>DSM 101675 / C91 / Nm57</strain>
    </source>
</reference>
<gene>
    <name evidence="1" type="primary">pyrG</name>
    <name type="ordered locus">Neut_2483</name>
</gene>
<evidence type="ECO:0000255" key="1">
    <source>
        <dbReference type="HAMAP-Rule" id="MF_01227"/>
    </source>
</evidence>
<organism>
    <name type="scientific">Nitrosomonas eutropha (strain DSM 101675 / C91 / Nm57)</name>
    <dbReference type="NCBI Taxonomy" id="335283"/>
    <lineage>
        <taxon>Bacteria</taxon>
        <taxon>Pseudomonadati</taxon>
        <taxon>Pseudomonadota</taxon>
        <taxon>Betaproteobacteria</taxon>
        <taxon>Nitrosomonadales</taxon>
        <taxon>Nitrosomonadaceae</taxon>
        <taxon>Nitrosomonas</taxon>
    </lineage>
</organism>
<dbReference type="EC" id="6.3.4.2" evidence="1"/>
<dbReference type="EMBL" id="CP000450">
    <property type="protein sequence ID" value="ABI60690.1"/>
    <property type="molecule type" value="Genomic_DNA"/>
</dbReference>
<dbReference type="RefSeq" id="WP_011635451.1">
    <property type="nucleotide sequence ID" value="NC_008344.1"/>
</dbReference>
<dbReference type="SMR" id="Q0AD92"/>
<dbReference type="STRING" id="335283.Neut_2483"/>
<dbReference type="MEROPS" id="C26.964"/>
<dbReference type="KEGG" id="net:Neut_2483"/>
<dbReference type="eggNOG" id="COG0504">
    <property type="taxonomic scope" value="Bacteria"/>
</dbReference>
<dbReference type="HOGENOM" id="CLU_011675_5_0_4"/>
<dbReference type="OrthoDB" id="9801107at2"/>
<dbReference type="UniPathway" id="UPA00159">
    <property type="reaction ID" value="UER00277"/>
</dbReference>
<dbReference type="Proteomes" id="UP000001966">
    <property type="component" value="Chromosome"/>
</dbReference>
<dbReference type="GO" id="GO:0005829">
    <property type="term" value="C:cytosol"/>
    <property type="evidence" value="ECO:0007669"/>
    <property type="project" value="TreeGrafter"/>
</dbReference>
<dbReference type="GO" id="GO:0005524">
    <property type="term" value="F:ATP binding"/>
    <property type="evidence" value="ECO:0007669"/>
    <property type="project" value="UniProtKB-KW"/>
</dbReference>
<dbReference type="GO" id="GO:0003883">
    <property type="term" value="F:CTP synthase activity"/>
    <property type="evidence" value="ECO:0007669"/>
    <property type="project" value="UniProtKB-UniRule"/>
</dbReference>
<dbReference type="GO" id="GO:0004359">
    <property type="term" value="F:glutaminase activity"/>
    <property type="evidence" value="ECO:0007669"/>
    <property type="project" value="RHEA"/>
</dbReference>
<dbReference type="GO" id="GO:0042802">
    <property type="term" value="F:identical protein binding"/>
    <property type="evidence" value="ECO:0007669"/>
    <property type="project" value="TreeGrafter"/>
</dbReference>
<dbReference type="GO" id="GO:0046872">
    <property type="term" value="F:metal ion binding"/>
    <property type="evidence" value="ECO:0007669"/>
    <property type="project" value="UniProtKB-KW"/>
</dbReference>
<dbReference type="GO" id="GO:0044210">
    <property type="term" value="P:'de novo' CTP biosynthetic process"/>
    <property type="evidence" value="ECO:0007669"/>
    <property type="project" value="UniProtKB-UniRule"/>
</dbReference>
<dbReference type="GO" id="GO:0019856">
    <property type="term" value="P:pyrimidine nucleobase biosynthetic process"/>
    <property type="evidence" value="ECO:0007669"/>
    <property type="project" value="TreeGrafter"/>
</dbReference>
<dbReference type="CDD" id="cd03113">
    <property type="entry name" value="CTPS_N"/>
    <property type="match status" value="1"/>
</dbReference>
<dbReference type="CDD" id="cd01746">
    <property type="entry name" value="GATase1_CTP_Synthase"/>
    <property type="match status" value="1"/>
</dbReference>
<dbReference type="FunFam" id="3.40.50.300:FF:000009">
    <property type="entry name" value="CTP synthase"/>
    <property type="match status" value="1"/>
</dbReference>
<dbReference type="FunFam" id="3.40.50.880:FF:000002">
    <property type="entry name" value="CTP synthase"/>
    <property type="match status" value="1"/>
</dbReference>
<dbReference type="Gene3D" id="3.40.50.880">
    <property type="match status" value="1"/>
</dbReference>
<dbReference type="Gene3D" id="3.40.50.300">
    <property type="entry name" value="P-loop containing nucleotide triphosphate hydrolases"/>
    <property type="match status" value="1"/>
</dbReference>
<dbReference type="HAMAP" id="MF_01227">
    <property type="entry name" value="PyrG"/>
    <property type="match status" value="1"/>
</dbReference>
<dbReference type="InterPro" id="IPR029062">
    <property type="entry name" value="Class_I_gatase-like"/>
</dbReference>
<dbReference type="InterPro" id="IPR004468">
    <property type="entry name" value="CTP_synthase"/>
</dbReference>
<dbReference type="InterPro" id="IPR017456">
    <property type="entry name" value="CTP_synthase_N"/>
</dbReference>
<dbReference type="InterPro" id="IPR017926">
    <property type="entry name" value="GATASE"/>
</dbReference>
<dbReference type="InterPro" id="IPR033828">
    <property type="entry name" value="GATase1_CTP_Synthase"/>
</dbReference>
<dbReference type="InterPro" id="IPR027417">
    <property type="entry name" value="P-loop_NTPase"/>
</dbReference>
<dbReference type="NCBIfam" id="NF003792">
    <property type="entry name" value="PRK05380.1"/>
    <property type="match status" value="1"/>
</dbReference>
<dbReference type="NCBIfam" id="TIGR00337">
    <property type="entry name" value="PyrG"/>
    <property type="match status" value="1"/>
</dbReference>
<dbReference type="PANTHER" id="PTHR11550">
    <property type="entry name" value="CTP SYNTHASE"/>
    <property type="match status" value="1"/>
</dbReference>
<dbReference type="PANTHER" id="PTHR11550:SF0">
    <property type="entry name" value="CTP SYNTHASE-RELATED"/>
    <property type="match status" value="1"/>
</dbReference>
<dbReference type="Pfam" id="PF06418">
    <property type="entry name" value="CTP_synth_N"/>
    <property type="match status" value="1"/>
</dbReference>
<dbReference type="Pfam" id="PF00117">
    <property type="entry name" value="GATase"/>
    <property type="match status" value="1"/>
</dbReference>
<dbReference type="SUPFAM" id="SSF52317">
    <property type="entry name" value="Class I glutamine amidotransferase-like"/>
    <property type="match status" value="1"/>
</dbReference>
<dbReference type="SUPFAM" id="SSF52540">
    <property type="entry name" value="P-loop containing nucleoside triphosphate hydrolases"/>
    <property type="match status" value="1"/>
</dbReference>
<dbReference type="PROSITE" id="PS51273">
    <property type="entry name" value="GATASE_TYPE_1"/>
    <property type="match status" value="1"/>
</dbReference>
<comment type="function">
    <text evidence="1">Catalyzes the ATP-dependent amination of UTP to CTP with either L-glutamine or ammonia as the source of nitrogen. Regulates intracellular CTP levels through interactions with the four ribonucleotide triphosphates.</text>
</comment>
<comment type="catalytic activity">
    <reaction evidence="1">
        <text>UTP + L-glutamine + ATP + H2O = CTP + L-glutamate + ADP + phosphate + 2 H(+)</text>
        <dbReference type="Rhea" id="RHEA:26426"/>
        <dbReference type="ChEBI" id="CHEBI:15377"/>
        <dbReference type="ChEBI" id="CHEBI:15378"/>
        <dbReference type="ChEBI" id="CHEBI:29985"/>
        <dbReference type="ChEBI" id="CHEBI:30616"/>
        <dbReference type="ChEBI" id="CHEBI:37563"/>
        <dbReference type="ChEBI" id="CHEBI:43474"/>
        <dbReference type="ChEBI" id="CHEBI:46398"/>
        <dbReference type="ChEBI" id="CHEBI:58359"/>
        <dbReference type="ChEBI" id="CHEBI:456216"/>
        <dbReference type="EC" id="6.3.4.2"/>
    </reaction>
</comment>
<comment type="catalytic activity">
    <reaction evidence="1">
        <text>L-glutamine + H2O = L-glutamate + NH4(+)</text>
        <dbReference type="Rhea" id="RHEA:15889"/>
        <dbReference type="ChEBI" id="CHEBI:15377"/>
        <dbReference type="ChEBI" id="CHEBI:28938"/>
        <dbReference type="ChEBI" id="CHEBI:29985"/>
        <dbReference type="ChEBI" id="CHEBI:58359"/>
    </reaction>
</comment>
<comment type="catalytic activity">
    <reaction evidence="1">
        <text>UTP + NH4(+) + ATP = CTP + ADP + phosphate + 2 H(+)</text>
        <dbReference type="Rhea" id="RHEA:16597"/>
        <dbReference type="ChEBI" id="CHEBI:15378"/>
        <dbReference type="ChEBI" id="CHEBI:28938"/>
        <dbReference type="ChEBI" id="CHEBI:30616"/>
        <dbReference type="ChEBI" id="CHEBI:37563"/>
        <dbReference type="ChEBI" id="CHEBI:43474"/>
        <dbReference type="ChEBI" id="CHEBI:46398"/>
        <dbReference type="ChEBI" id="CHEBI:456216"/>
    </reaction>
</comment>
<comment type="activity regulation">
    <text evidence="1">Allosterically activated by GTP, when glutamine is the substrate; GTP has no effect on the reaction when ammonia is the substrate. The allosteric effector GTP functions by stabilizing the protein conformation that binds the tetrahedral intermediate(s) formed during glutamine hydrolysis. Inhibited by the product CTP, via allosteric rather than competitive inhibition.</text>
</comment>
<comment type="pathway">
    <text evidence="1">Pyrimidine metabolism; CTP biosynthesis via de novo pathway; CTP from UDP: step 2/2.</text>
</comment>
<comment type="subunit">
    <text evidence="1">Homotetramer.</text>
</comment>
<comment type="miscellaneous">
    <text evidence="1">CTPSs have evolved a hybrid strategy for distinguishing between UTP and CTP. The overlapping regions of the product feedback inhibitory and substrate sites recognize a common feature in both compounds, the triphosphate moiety. To differentiate isosteric substrate and product pyrimidine rings, an additional pocket far from the expected kinase/ligase catalytic site, specifically recognizes the cytosine and ribose portions of the product inhibitor.</text>
</comment>
<comment type="similarity">
    <text evidence="1">Belongs to the CTP synthase family.</text>
</comment>
<feature type="chain" id="PRO_1000139506" description="CTP synthase">
    <location>
        <begin position="1"/>
        <end position="564"/>
    </location>
</feature>
<feature type="domain" description="Glutamine amidotransferase type-1" evidence="1">
    <location>
        <begin position="290"/>
        <end position="543"/>
    </location>
</feature>
<feature type="region of interest" description="Amidoligase domain" evidence="1">
    <location>
        <begin position="1"/>
        <end position="265"/>
    </location>
</feature>
<feature type="active site" description="Nucleophile; for glutamine hydrolysis" evidence="1">
    <location>
        <position position="378"/>
    </location>
</feature>
<feature type="active site" evidence="1">
    <location>
        <position position="516"/>
    </location>
</feature>
<feature type="active site" evidence="1">
    <location>
        <position position="518"/>
    </location>
</feature>
<feature type="binding site" evidence="1">
    <location>
        <position position="13"/>
    </location>
    <ligand>
        <name>CTP</name>
        <dbReference type="ChEBI" id="CHEBI:37563"/>
        <note>allosteric inhibitor</note>
    </ligand>
</feature>
<feature type="binding site" evidence="1">
    <location>
        <position position="13"/>
    </location>
    <ligand>
        <name>UTP</name>
        <dbReference type="ChEBI" id="CHEBI:46398"/>
    </ligand>
</feature>
<feature type="binding site" evidence="1">
    <location>
        <begin position="14"/>
        <end position="19"/>
    </location>
    <ligand>
        <name>ATP</name>
        <dbReference type="ChEBI" id="CHEBI:30616"/>
    </ligand>
</feature>
<feature type="binding site" evidence="1">
    <location>
        <position position="71"/>
    </location>
    <ligand>
        <name>ATP</name>
        <dbReference type="ChEBI" id="CHEBI:30616"/>
    </ligand>
</feature>
<feature type="binding site" evidence="1">
    <location>
        <position position="71"/>
    </location>
    <ligand>
        <name>Mg(2+)</name>
        <dbReference type="ChEBI" id="CHEBI:18420"/>
    </ligand>
</feature>
<feature type="binding site" evidence="1">
    <location>
        <position position="139"/>
    </location>
    <ligand>
        <name>Mg(2+)</name>
        <dbReference type="ChEBI" id="CHEBI:18420"/>
    </ligand>
</feature>
<feature type="binding site" evidence="1">
    <location>
        <begin position="146"/>
        <end position="148"/>
    </location>
    <ligand>
        <name>CTP</name>
        <dbReference type="ChEBI" id="CHEBI:37563"/>
        <note>allosteric inhibitor</note>
    </ligand>
</feature>
<feature type="binding site" evidence="1">
    <location>
        <begin position="186"/>
        <end position="191"/>
    </location>
    <ligand>
        <name>CTP</name>
        <dbReference type="ChEBI" id="CHEBI:37563"/>
        <note>allosteric inhibitor</note>
    </ligand>
</feature>
<feature type="binding site" evidence="1">
    <location>
        <begin position="186"/>
        <end position="191"/>
    </location>
    <ligand>
        <name>UTP</name>
        <dbReference type="ChEBI" id="CHEBI:46398"/>
    </ligand>
</feature>
<feature type="binding site" evidence="1">
    <location>
        <position position="222"/>
    </location>
    <ligand>
        <name>CTP</name>
        <dbReference type="ChEBI" id="CHEBI:37563"/>
        <note>allosteric inhibitor</note>
    </ligand>
</feature>
<feature type="binding site" evidence="1">
    <location>
        <position position="222"/>
    </location>
    <ligand>
        <name>UTP</name>
        <dbReference type="ChEBI" id="CHEBI:46398"/>
    </ligand>
</feature>
<feature type="binding site" evidence="1">
    <location>
        <position position="351"/>
    </location>
    <ligand>
        <name>L-glutamine</name>
        <dbReference type="ChEBI" id="CHEBI:58359"/>
    </ligand>
</feature>
<feature type="binding site" evidence="1">
    <location>
        <begin position="379"/>
        <end position="382"/>
    </location>
    <ligand>
        <name>L-glutamine</name>
        <dbReference type="ChEBI" id="CHEBI:58359"/>
    </ligand>
</feature>
<feature type="binding site" evidence="1">
    <location>
        <position position="402"/>
    </location>
    <ligand>
        <name>L-glutamine</name>
        <dbReference type="ChEBI" id="CHEBI:58359"/>
    </ligand>
</feature>
<feature type="binding site" evidence="1">
    <location>
        <position position="469"/>
    </location>
    <ligand>
        <name>L-glutamine</name>
        <dbReference type="ChEBI" id="CHEBI:58359"/>
    </ligand>
</feature>
<name>PYRG_NITEC</name>